<reference key="1">
    <citation type="journal article" date="2010" name="Genome Biol. Evol.">
        <title>Continuing evolution of Burkholderia mallei through genome reduction and large-scale rearrangements.</title>
        <authorList>
            <person name="Losada L."/>
            <person name="Ronning C.M."/>
            <person name="DeShazer D."/>
            <person name="Woods D."/>
            <person name="Fedorova N."/>
            <person name="Kim H.S."/>
            <person name="Shabalina S.A."/>
            <person name="Pearson T.R."/>
            <person name="Brinkac L."/>
            <person name="Tan P."/>
            <person name="Nandi T."/>
            <person name="Crabtree J."/>
            <person name="Badger J."/>
            <person name="Beckstrom-Sternberg S."/>
            <person name="Saqib M."/>
            <person name="Schutzer S.E."/>
            <person name="Keim P."/>
            <person name="Nierman W.C."/>
        </authorList>
    </citation>
    <scope>NUCLEOTIDE SEQUENCE [LARGE SCALE GENOMIC DNA]</scope>
    <source>
        <strain>668</strain>
    </source>
</reference>
<comment type="function">
    <text evidence="1">Bifunctional enzyme with both catalase and broad-spectrum peroxidase activity.</text>
</comment>
<comment type="catalytic activity">
    <reaction evidence="1">
        <text>H2O2 + AH2 = A + 2 H2O</text>
        <dbReference type="Rhea" id="RHEA:30275"/>
        <dbReference type="ChEBI" id="CHEBI:13193"/>
        <dbReference type="ChEBI" id="CHEBI:15377"/>
        <dbReference type="ChEBI" id="CHEBI:16240"/>
        <dbReference type="ChEBI" id="CHEBI:17499"/>
        <dbReference type="EC" id="1.11.1.21"/>
    </reaction>
</comment>
<comment type="catalytic activity">
    <reaction evidence="1">
        <text>2 H2O2 = O2 + 2 H2O</text>
        <dbReference type="Rhea" id="RHEA:20309"/>
        <dbReference type="ChEBI" id="CHEBI:15377"/>
        <dbReference type="ChEBI" id="CHEBI:15379"/>
        <dbReference type="ChEBI" id="CHEBI:16240"/>
        <dbReference type="EC" id="1.11.1.21"/>
    </reaction>
</comment>
<comment type="cofactor">
    <cofactor evidence="1">
        <name>heme b</name>
        <dbReference type="ChEBI" id="CHEBI:60344"/>
    </cofactor>
    <text evidence="1">Binds 1 heme b (iron(II)-protoporphyrin IX) group per dimer.</text>
</comment>
<comment type="subunit">
    <text evidence="1">Homodimer or homotetramer.</text>
</comment>
<comment type="PTM">
    <text evidence="1">Formation of the three residue Trp-Tyr-Met cross-link is important for the catalase, but not the peroxidase activity of the enzyme.</text>
</comment>
<comment type="similarity">
    <text evidence="1">Belongs to the peroxidase family. Peroxidase/catalase subfamily.</text>
</comment>
<accession>A3NDB2</accession>
<feature type="chain" id="PRO_0000354749" description="Catalase-peroxidase">
    <location>
        <begin position="1"/>
        <end position="728"/>
    </location>
</feature>
<feature type="active site" description="Proton acceptor" evidence="1">
    <location>
        <position position="92"/>
    </location>
</feature>
<feature type="binding site" description="axial binding residue" evidence="1">
    <location>
        <position position="259"/>
    </location>
    <ligand>
        <name>heme b</name>
        <dbReference type="ChEBI" id="CHEBI:60344"/>
    </ligand>
    <ligandPart>
        <name>Fe</name>
        <dbReference type="ChEBI" id="CHEBI:18248"/>
    </ligandPart>
</feature>
<feature type="site" description="Transition state stabilizer" evidence="1">
    <location>
        <position position="88"/>
    </location>
</feature>
<feature type="cross-link" description="Tryptophyl-tyrosyl-methioninium (Trp-Tyr) (with M-244)" evidence="1">
    <location>
        <begin position="91"/>
        <end position="218"/>
    </location>
</feature>
<feature type="cross-link" description="Tryptophyl-tyrosyl-methioninium (Tyr-Met) (with W-91)" evidence="1">
    <location>
        <begin position="218"/>
        <end position="244"/>
    </location>
</feature>
<protein>
    <recommendedName>
        <fullName evidence="1">Catalase-peroxidase</fullName>
        <shortName evidence="1">CP</shortName>
        <ecNumber evidence="1">1.11.1.21</ecNumber>
    </recommendedName>
    <alternativeName>
        <fullName evidence="1">Peroxidase/catalase</fullName>
    </alternativeName>
</protein>
<gene>
    <name evidence="1" type="primary">katG</name>
    <name type="ordered locus">BURPS668_3322</name>
</gene>
<evidence type="ECO:0000255" key="1">
    <source>
        <dbReference type="HAMAP-Rule" id="MF_01961"/>
    </source>
</evidence>
<proteinExistence type="inferred from homology"/>
<name>KATG_BURP6</name>
<keyword id="KW-0349">Heme</keyword>
<keyword id="KW-0376">Hydrogen peroxide</keyword>
<keyword id="KW-0408">Iron</keyword>
<keyword id="KW-0479">Metal-binding</keyword>
<keyword id="KW-0560">Oxidoreductase</keyword>
<keyword id="KW-0575">Peroxidase</keyword>
<organism>
    <name type="scientific">Burkholderia pseudomallei (strain 668)</name>
    <dbReference type="NCBI Taxonomy" id="320373"/>
    <lineage>
        <taxon>Bacteria</taxon>
        <taxon>Pseudomonadati</taxon>
        <taxon>Pseudomonadota</taxon>
        <taxon>Betaproteobacteria</taxon>
        <taxon>Burkholderiales</taxon>
        <taxon>Burkholderiaceae</taxon>
        <taxon>Burkholderia</taxon>
        <taxon>pseudomallei group</taxon>
    </lineage>
</organism>
<sequence length="728" mass="79388">MSNEAKCPFHQAAGNGTSNRDWWPNQLDLSILHRHSSLSDPMGKDFNYAQAFEKLDLAAVKRDLHALMTTSQDWWPADFGHYGGLFIRMAWHSAGTYRTADGRGGAGEGQQRFAPLNSWPDNANLDKARRLLWPIKQKYGRAISWADLLILTGNVALESMGFKTFGFAGGRADTWEPEDVYWGSEKIWLELSGGPNSRYSGDRQLENPLAAVQMGLIYVNPEGPDGNPDPVAAARDIRDTFARMAMNDEETVALIAGGHTFGKTHGAGPASNVGAEPEAAGIEAQGLGWKSAYRTGKGADAITSGLEVTWTTTPTQWSHNFFENLFGYEWELTKSPAGAHQWVAKGADAVIPDAFDPSKKHRPTMLTTDLSLRFDPAYEKISRRFHENPEQFADAFARAWFKLTHRDMGPRARYLGPEVPAEVLLWQDPIPAVDHPLIDAADAAELKAKVLASGLTVSQLVSTAWAAASTFRGSDKRGGANGARIRLAPQKDWEANQPEQLAAVLETLEAIRTAFNGAQRGGKQVSLADLIVLAGCAGVEQAAKNAGHAVTVPFAPGRADASQEQTDVESMAVLEPVADGFRNYLKGKYRVPAEVLLVDKAQLLTLSAPEMTVLLGGLRVLGANVGQSRHGVFTAREQALTNDFFVNLLDMGTEWKPTAADADVFEGRDRATGALKWTGTRVDLVFGSHSQLRALAEVYGSADAQEKFVRDFVAVWNKVMNLDRFDLA</sequence>
<dbReference type="EC" id="1.11.1.21" evidence="1"/>
<dbReference type="EMBL" id="CP000570">
    <property type="protein sequence ID" value="ABN83678.1"/>
    <property type="molecule type" value="Genomic_DNA"/>
</dbReference>
<dbReference type="RefSeq" id="WP_004194237.1">
    <property type="nucleotide sequence ID" value="NC_009074.1"/>
</dbReference>
<dbReference type="SMR" id="A3NDB2"/>
<dbReference type="GeneID" id="93061455"/>
<dbReference type="KEGG" id="bpd:BURPS668_3322"/>
<dbReference type="HOGENOM" id="CLU_025424_2_0_4"/>
<dbReference type="GO" id="GO:0005829">
    <property type="term" value="C:cytosol"/>
    <property type="evidence" value="ECO:0007669"/>
    <property type="project" value="TreeGrafter"/>
</dbReference>
<dbReference type="GO" id="GO:0004096">
    <property type="term" value="F:catalase activity"/>
    <property type="evidence" value="ECO:0007669"/>
    <property type="project" value="UniProtKB-UniRule"/>
</dbReference>
<dbReference type="GO" id="GO:0020037">
    <property type="term" value="F:heme binding"/>
    <property type="evidence" value="ECO:0007669"/>
    <property type="project" value="InterPro"/>
</dbReference>
<dbReference type="GO" id="GO:0046872">
    <property type="term" value="F:metal ion binding"/>
    <property type="evidence" value="ECO:0007669"/>
    <property type="project" value="UniProtKB-KW"/>
</dbReference>
<dbReference type="GO" id="GO:0070301">
    <property type="term" value="P:cellular response to hydrogen peroxide"/>
    <property type="evidence" value="ECO:0007669"/>
    <property type="project" value="TreeGrafter"/>
</dbReference>
<dbReference type="GO" id="GO:0042744">
    <property type="term" value="P:hydrogen peroxide catabolic process"/>
    <property type="evidence" value="ECO:0007669"/>
    <property type="project" value="UniProtKB-KW"/>
</dbReference>
<dbReference type="CDD" id="cd00649">
    <property type="entry name" value="catalase_peroxidase_1"/>
    <property type="match status" value="1"/>
</dbReference>
<dbReference type="CDD" id="cd08200">
    <property type="entry name" value="catalase_peroxidase_2"/>
    <property type="match status" value="1"/>
</dbReference>
<dbReference type="FunFam" id="1.10.420.10:FF:000002">
    <property type="entry name" value="Catalase-peroxidase"/>
    <property type="match status" value="1"/>
</dbReference>
<dbReference type="FunFam" id="1.10.420.10:FF:000004">
    <property type="entry name" value="Catalase-peroxidase"/>
    <property type="match status" value="1"/>
</dbReference>
<dbReference type="FunFam" id="1.10.520.10:FF:000002">
    <property type="entry name" value="Catalase-peroxidase"/>
    <property type="match status" value="1"/>
</dbReference>
<dbReference type="FunFam" id="1.10.520.10:FF:000004">
    <property type="entry name" value="Catalase-peroxidase"/>
    <property type="match status" value="1"/>
</dbReference>
<dbReference type="Gene3D" id="1.10.520.10">
    <property type="match status" value="2"/>
</dbReference>
<dbReference type="Gene3D" id="1.10.420.10">
    <property type="entry name" value="Peroxidase, domain 2"/>
    <property type="match status" value="2"/>
</dbReference>
<dbReference type="HAMAP" id="MF_01961">
    <property type="entry name" value="Catal_peroxid"/>
    <property type="match status" value="1"/>
</dbReference>
<dbReference type="InterPro" id="IPR000763">
    <property type="entry name" value="Catalase_peroxidase"/>
</dbReference>
<dbReference type="InterPro" id="IPR002016">
    <property type="entry name" value="Haem_peroxidase"/>
</dbReference>
<dbReference type="InterPro" id="IPR010255">
    <property type="entry name" value="Haem_peroxidase_sf"/>
</dbReference>
<dbReference type="InterPro" id="IPR019794">
    <property type="entry name" value="Peroxidases_AS"/>
</dbReference>
<dbReference type="InterPro" id="IPR019793">
    <property type="entry name" value="Peroxidases_heam-ligand_BS"/>
</dbReference>
<dbReference type="NCBIfam" id="TIGR00198">
    <property type="entry name" value="cat_per_HPI"/>
    <property type="match status" value="1"/>
</dbReference>
<dbReference type="NCBIfam" id="NF011635">
    <property type="entry name" value="PRK15061.1"/>
    <property type="match status" value="1"/>
</dbReference>
<dbReference type="PANTHER" id="PTHR30555:SF0">
    <property type="entry name" value="CATALASE-PEROXIDASE"/>
    <property type="match status" value="1"/>
</dbReference>
<dbReference type="PANTHER" id="PTHR30555">
    <property type="entry name" value="HYDROPEROXIDASE I, BIFUNCTIONAL CATALASE-PEROXIDASE"/>
    <property type="match status" value="1"/>
</dbReference>
<dbReference type="Pfam" id="PF00141">
    <property type="entry name" value="peroxidase"/>
    <property type="match status" value="2"/>
</dbReference>
<dbReference type="PRINTS" id="PR00460">
    <property type="entry name" value="BPEROXIDASE"/>
</dbReference>
<dbReference type="PRINTS" id="PR00458">
    <property type="entry name" value="PEROXIDASE"/>
</dbReference>
<dbReference type="SUPFAM" id="SSF48113">
    <property type="entry name" value="Heme-dependent peroxidases"/>
    <property type="match status" value="2"/>
</dbReference>
<dbReference type="PROSITE" id="PS00435">
    <property type="entry name" value="PEROXIDASE_1"/>
    <property type="match status" value="1"/>
</dbReference>
<dbReference type="PROSITE" id="PS00436">
    <property type="entry name" value="PEROXIDASE_2"/>
    <property type="match status" value="1"/>
</dbReference>
<dbReference type="PROSITE" id="PS50873">
    <property type="entry name" value="PEROXIDASE_4"/>
    <property type="match status" value="1"/>
</dbReference>